<reference key="1">
    <citation type="submission" date="2001-04" db="EMBL/GenBank/DDBJ databases">
        <title>Isolation of full-length cDNA clones from macaque brain cDNA libraries.</title>
        <authorList>
            <person name="Osada N."/>
            <person name="Hida M."/>
            <person name="Kusuda J."/>
            <person name="Tanuma R."/>
            <person name="Iseki K."/>
            <person name="Hirai M."/>
            <person name="Terao K."/>
            <person name="Suzuki Y."/>
            <person name="Sugano S."/>
            <person name="Hashimoto K."/>
        </authorList>
    </citation>
    <scope>NUCLEOTIDE SEQUENCE [LARGE SCALE MRNA]</scope>
    <source>
        <tissue>Temporal cortex</tissue>
    </source>
</reference>
<accession>Q95KF9</accession>
<feature type="chain" id="PRO_0000096903" description="Zinc finger CCHC domain-containing protein 17">
    <location>
        <begin position="1"/>
        <end position="193"/>
    </location>
</feature>
<feature type="domain" description="S1 motif; truncated">
    <location>
        <begin position="1"/>
        <end position="40"/>
    </location>
</feature>
<feature type="zinc finger region" description="CCHC-type" evidence="4">
    <location>
        <begin position="83"/>
        <end position="100"/>
    </location>
</feature>
<feature type="region of interest" description="Disordered" evidence="5">
    <location>
        <begin position="113"/>
        <end position="193"/>
    </location>
</feature>
<feature type="compositionally biased region" description="Basic and acidic residues" evidence="5">
    <location>
        <begin position="118"/>
        <end position="129"/>
    </location>
</feature>
<feature type="compositionally biased region" description="Basic residues" evidence="5">
    <location>
        <begin position="134"/>
        <end position="150"/>
    </location>
</feature>
<feature type="compositionally biased region" description="Basic and acidic residues" evidence="5">
    <location>
        <begin position="163"/>
        <end position="177"/>
    </location>
</feature>
<feature type="compositionally biased region" description="Basic residues" evidence="5">
    <location>
        <begin position="178"/>
        <end position="193"/>
    </location>
</feature>
<feature type="modified residue" description="Phosphoserine" evidence="3">
    <location>
        <position position="66"/>
    </location>
</feature>
<feature type="modified residue" description="N6-acetyllysine" evidence="2">
    <location>
        <position position="96"/>
    </location>
</feature>
<feature type="modified residue" description="Phosphoserine" evidence="3">
    <location>
        <position position="135"/>
    </location>
</feature>
<proteinExistence type="evidence at transcript level"/>
<protein>
    <recommendedName>
        <fullName>Zinc finger CCHC domain-containing protein 17</fullName>
    </recommendedName>
    <alternativeName>
        <fullName>Nucleolar protein of 40 kDa</fullName>
        <shortName>pNO40</shortName>
    </alternativeName>
    <alternativeName>
        <fullName>Putative S1 RNA-binding domain protein</fullName>
        <shortName>PS1D protein</shortName>
    </alternativeName>
</protein>
<dbReference type="EMBL" id="AB060897">
    <property type="protein sequence ID" value="BAB46900.1"/>
    <property type="molecule type" value="mRNA"/>
</dbReference>
<dbReference type="RefSeq" id="XP_015307786.1">
    <property type="nucleotide sequence ID" value="XM_015452300.3"/>
</dbReference>
<dbReference type="RefSeq" id="XP_045232066.1">
    <property type="nucleotide sequence ID" value="XM_045376131.2"/>
</dbReference>
<dbReference type="SMR" id="Q95KF9"/>
<dbReference type="STRING" id="9541.ENSMFAP00000002553"/>
<dbReference type="Ensembl" id="ENSMFAT00000027708.2">
    <property type="protein sequence ID" value="ENSMFAP00000002561.2"/>
    <property type="gene ID" value="ENSMFAG00000039045.2"/>
</dbReference>
<dbReference type="GeneID" id="102143194"/>
<dbReference type="CTD" id="51538"/>
<dbReference type="eggNOG" id="KOG0922">
    <property type="taxonomic scope" value="Eukaryota"/>
</dbReference>
<dbReference type="GeneTree" id="ENSGT00510000047363"/>
<dbReference type="Proteomes" id="UP000233100">
    <property type="component" value="Chromosome 1"/>
</dbReference>
<dbReference type="Bgee" id="ENSMFAG00000039045">
    <property type="expression patterns" value="Expressed in temporal lobe and 13 other cell types or tissues"/>
</dbReference>
<dbReference type="GO" id="GO:0005730">
    <property type="term" value="C:nucleolus"/>
    <property type="evidence" value="ECO:0007669"/>
    <property type="project" value="UniProtKB-SubCell"/>
</dbReference>
<dbReference type="GO" id="GO:1990904">
    <property type="term" value="C:ribonucleoprotein complex"/>
    <property type="evidence" value="ECO:0007669"/>
    <property type="project" value="UniProtKB-KW"/>
</dbReference>
<dbReference type="GO" id="GO:0003723">
    <property type="term" value="F:RNA binding"/>
    <property type="evidence" value="ECO:0007669"/>
    <property type="project" value="TreeGrafter"/>
</dbReference>
<dbReference type="GO" id="GO:0008270">
    <property type="term" value="F:zinc ion binding"/>
    <property type="evidence" value="ECO:0007669"/>
    <property type="project" value="UniProtKB-KW"/>
</dbReference>
<dbReference type="GO" id="GO:0043489">
    <property type="term" value="P:RNA stabilization"/>
    <property type="evidence" value="ECO:0007669"/>
    <property type="project" value="TreeGrafter"/>
</dbReference>
<dbReference type="Gene3D" id="2.40.50.140">
    <property type="entry name" value="Nucleic acid-binding proteins"/>
    <property type="match status" value="1"/>
</dbReference>
<dbReference type="Gene3D" id="4.10.60.10">
    <property type="entry name" value="Zinc finger, CCHC-type"/>
    <property type="match status" value="1"/>
</dbReference>
<dbReference type="InterPro" id="IPR012340">
    <property type="entry name" value="NA-bd_OB-fold"/>
</dbReference>
<dbReference type="InterPro" id="IPR001878">
    <property type="entry name" value="Znf_CCHC"/>
</dbReference>
<dbReference type="PANTHER" id="PTHR15838">
    <property type="entry name" value="NUCLEOLAR PROTEIN OF 40 KDA"/>
    <property type="match status" value="1"/>
</dbReference>
<dbReference type="PANTHER" id="PTHR15838:SF1">
    <property type="entry name" value="ZINC FINGER CCHC DOMAIN-CONTAINING PROTEIN 17"/>
    <property type="match status" value="1"/>
</dbReference>
<dbReference type="PROSITE" id="PS50158">
    <property type="entry name" value="ZF_CCHC"/>
    <property type="match status" value="1"/>
</dbReference>
<gene>
    <name type="primary">ZCCHC17</name>
    <name type="synonym">PS1D</name>
    <name type="ORF">QtrA-13767</name>
</gene>
<keyword id="KW-0007">Acetylation</keyword>
<keyword id="KW-0479">Metal-binding</keyword>
<keyword id="KW-0539">Nucleus</keyword>
<keyword id="KW-0597">Phosphoprotein</keyword>
<keyword id="KW-1185">Reference proteome</keyword>
<keyword id="KW-0687">Ribonucleoprotein</keyword>
<keyword id="KW-0862">Zinc</keyword>
<keyword id="KW-0863">Zinc-finger</keyword>
<comment type="subunit">
    <text evidence="1">May interact with PNN. May associate with the 60 S ribosomal subunit (By similarity).</text>
</comment>
<comment type="subcellular location">
    <subcellularLocation>
        <location evidence="1">Nucleus</location>
        <location evidence="1">Nucleolus</location>
    </subcellularLocation>
</comment>
<evidence type="ECO:0000250" key="1"/>
<evidence type="ECO:0000250" key="2">
    <source>
        <dbReference type="UniProtKB" id="Q9ESX4"/>
    </source>
</evidence>
<evidence type="ECO:0000250" key="3">
    <source>
        <dbReference type="UniProtKB" id="Q9NP64"/>
    </source>
</evidence>
<evidence type="ECO:0000255" key="4">
    <source>
        <dbReference type="PROSITE-ProRule" id="PRU00047"/>
    </source>
</evidence>
<evidence type="ECO:0000256" key="5">
    <source>
        <dbReference type="SAM" id="MobiDB-lite"/>
    </source>
</evidence>
<name>ZCC17_MACFA</name>
<sequence>MSSCRVDKPSEIVDVGDKVWVKLIGREMKNDRIKVSLSMKVVNQGTGKDLDPNNVIIEQEERRRRSFQDYTGQKITLEAVLNTTCKKCGCKGHFAKDCFMQPGGTKYSLIPDEEEEKEEAKSAEFEKPVPTRNPSRKRKKEKKKKKHRDRKSSDSDSSDSESDTGKRARHTSKDSKAAKKKKKKKKHKKKHKE</sequence>
<organism>
    <name type="scientific">Macaca fascicularis</name>
    <name type="common">Crab-eating macaque</name>
    <name type="synonym">Cynomolgus monkey</name>
    <dbReference type="NCBI Taxonomy" id="9541"/>
    <lineage>
        <taxon>Eukaryota</taxon>
        <taxon>Metazoa</taxon>
        <taxon>Chordata</taxon>
        <taxon>Craniata</taxon>
        <taxon>Vertebrata</taxon>
        <taxon>Euteleostomi</taxon>
        <taxon>Mammalia</taxon>
        <taxon>Eutheria</taxon>
        <taxon>Euarchontoglires</taxon>
        <taxon>Primates</taxon>
        <taxon>Haplorrhini</taxon>
        <taxon>Catarrhini</taxon>
        <taxon>Cercopithecidae</taxon>
        <taxon>Cercopithecinae</taxon>
        <taxon>Macaca</taxon>
    </lineage>
</organism>